<keyword id="KW-0027">Amidation</keyword>
<keyword id="KW-0903">Direct protein sequencing</keyword>
<keyword id="KW-0527">Neuropeptide</keyword>
<keyword id="KW-0964">Secreted</keyword>
<protein>
    <recommendedName>
        <fullName>Periviscerokinin-2.1</fullName>
    </recommendedName>
    <alternativeName>
        <fullName>Pea-PVK-2-like peptide</fullName>
    </alternativeName>
    <alternativeName>
        <fullName>Periviscerokinin-3</fullName>
        <shortName>BlaOr-PVK-3</shortName>
    </alternativeName>
</protein>
<feature type="peptide" id="PRO_0000044257" description="Periviscerokinin-2.1">
    <location>
        <begin position="1"/>
        <end position="12"/>
    </location>
</feature>
<feature type="modified residue" description="Valine amide" evidence="2 3">
    <location>
        <position position="12"/>
    </location>
</feature>
<name>PVK21_BLAOR</name>
<dbReference type="GO" id="GO:0005576">
    <property type="term" value="C:extracellular region"/>
    <property type="evidence" value="ECO:0007669"/>
    <property type="project" value="UniProtKB-SubCell"/>
</dbReference>
<dbReference type="GO" id="GO:0007218">
    <property type="term" value="P:neuropeptide signaling pathway"/>
    <property type="evidence" value="ECO:0007669"/>
    <property type="project" value="UniProtKB-KW"/>
</dbReference>
<dbReference type="InterPro" id="IPR013231">
    <property type="entry name" value="Periviscerokinin"/>
</dbReference>
<dbReference type="Pfam" id="PF08259">
    <property type="entry name" value="Periviscerokin"/>
    <property type="match status" value="1"/>
</dbReference>
<reference evidence="4" key="1">
    <citation type="journal article" date="2005" name="Peptides">
        <title>Peptidomics of neurohemal organs from species of the cockroach family Blattidae: how do neuropeptides of closely related species differ?</title>
        <authorList>
            <person name="Predel R."/>
            <person name="Gaede G."/>
        </authorList>
    </citation>
    <scope>PROTEIN SEQUENCE</scope>
    <scope>MASS SPECTROMETRY</scope>
    <scope>AMIDATION AT VAL-12</scope>
    <source>
        <tissue evidence="2">Abdominal perisympathetic organs</tissue>
    </source>
</reference>
<reference key="2">
    <citation type="journal article" date="2009" name="BMC Evol. Biol.">
        <title>A proteomic approach for studying insect phylogeny: CAPA peptides of ancient insect taxa (Dictyoptera, Blattoptera) as a test case.</title>
        <authorList>
            <person name="Roth S."/>
            <person name="Fromm B."/>
            <person name="Gaede G."/>
            <person name="Predel R."/>
        </authorList>
    </citation>
    <scope>PROTEIN SEQUENCE</scope>
    <scope>AMIDATION AT VAL-12</scope>
    <source>
        <tissue>Abdominal perisympathetic organs</tissue>
    </source>
</reference>
<comment type="function">
    <text evidence="4">Mediates visceral muscle contractile activity (myotropic activity).</text>
</comment>
<comment type="subcellular location">
    <subcellularLocation>
        <location evidence="4">Secreted</location>
    </subcellularLocation>
</comment>
<comment type="mass spectrometry"/>
<comment type="similarity">
    <text evidence="1">Belongs to the periviscerokinin family.</text>
</comment>
<accession>P84438</accession>
<organism>
    <name type="scientific">Blatta orientalis</name>
    <name type="common">Oriental cockroach</name>
    <dbReference type="NCBI Taxonomy" id="6976"/>
    <lineage>
        <taxon>Eukaryota</taxon>
        <taxon>Metazoa</taxon>
        <taxon>Ecdysozoa</taxon>
        <taxon>Arthropoda</taxon>
        <taxon>Hexapoda</taxon>
        <taxon>Insecta</taxon>
        <taxon>Pterygota</taxon>
        <taxon>Neoptera</taxon>
        <taxon>Polyneoptera</taxon>
        <taxon>Dictyoptera</taxon>
        <taxon>Blattodea</taxon>
        <taxon>Blattoidea</taxon>
        <taxon>Blattidae</taxon>
        <taxon>Blattinae</taxon>
        <taxon>Blatta</taxon>
    </lineage>
</organism>
<sequence>GSSSGLISMPRV</sequence>
<proteinExistence type="evidence at protein level"/>
<evidence type="ECO:0000255" key="1"/>
<evidence type="ECO:0000269" key="2">
    <source>
    </source>
</evidence>
<evidence type="ECO:0000269" key="3">
    <source>
    </source>
</evidence>
<evidence type="ECO:0000305" key="4"/>